<geneLocation type="mitochondrion"/>
<organism>
    <name type="scientific">Porthidium nasutum</name>
    <name type="common">Hognosed pitviper</name>
    <name type="synonym">Bothrops nasutus</name>
    <dbReference type="NCBI Taxonomy" id="74558"/>
    <lineage>
        <taxon>Eukaryota</taxon>
        <taxon>Metazoa</taxon>
        <taxon>Chordata</taxon>
        <taxon>Craniata</taxon>
        <taxon>Vertebrata</taxon>
        <taxon>Euteleostomi</taxon>
        <taxon>Lepidosauria</taxon>
        <taxon>Squamata</taxon>
        <taxon>Bifurcata</taxon>
        <taxon>Unidentata</taxon>
        <taxon>Episquamata</taxon>
        <taxon>Toxicofera</taxon>
        <taxon>Serpentes</taxon>
        <taxon>Colubroidea</taxon>
        <taxon>Viperidae</taxon>
        <taxon>Crotalinae</taxon>
        <taxon>Porthidium</taxon>
    </lineage>
</organism>
<feature type="chain" id="PRO_0000117977" description="NADH-ubiquinone oxidoreductase chain 4">
    <location>
        <begin position="1" status="less than"/>
        <end position="231" status="greater than"/>
    </location>
</feature>
<feature type="transmembrane region" description="Helical" evidence="2">
    <location>
        <begin position="1"/>
        <end position="21"/>
    </location>
</feature>
<feature type="transmembrane region" description="Helical" evidence="2">
    <location>
        <begin position="34"/>
        <end position="54"/>
    </location>
</feature>
<feature type="transmembrane region" description="Helical" evidence="2">
    <location>
        <begin position="61"/>
        <end position="80"/>
    </location>
</feature>
<feature type="transmembrane region" description="Helical" evidence="2">
    <location>
        <begin position="84"/>
        <end position="106"/>
    </location>
</feature>
<feature type="transmembrane region" description="Helical" evidence="2">
    <location>
        <begin position="118"/>
        <end position="138"/>
    </location>
</feature>
<feature type="transmembrane region" description="Helical" evidence="2">
    <location>
        <begin position="169"/>
        <end position="189"/>
    </location>
</feature>
<feature type="non-terminal residue">
    <location>
        <position position="1"/>
    </location>
</feature>
<feature type="non-terminal residue">
    <location>
        <position position="231"/>
    </location>
</feature>
<protein>
    <recommendedName>
        <fullName>NADH-ubiquinone oxidoreductase chain 4</fullName>
        <ecNumber>7.1.1.2</ecNumber>
    </recommendedName>
    <alternativeName>
        <fullName>NADH dehydrogenase subunit 4</fullName>
    </alternativeName>
</protein>
<keyword id="KW-0249">Electron transport</keyword>
<keyword id="KW-0472">Membrane</keyword>
<keyword id="KW-0496">Mitochondrion</keyword>
<keyword id="KW-0520">NAD</keyword>
<keyword id="KW-0679">Respiratory chain</keyword>
<keyword id="KW-1278">Translocase</keyword>
<keyword id="KW-0812">Transmembrane</keyword>
<keyword id="KW-1133">Transmembrane helix</keyword>
<keyword id="KW-0813">Transport</keyword>
<keyword id="KW-0830">Ubiquinone</keyword>
<gene>
    <name type="primary">MT-ND4</name>
    <name type="synonym">MTND4</name>
    <name type="synonym">NADH4</name>
    <name type="synonym">ND4</name>
</gene>
<comment type="function">
    <text evidence="1">Core subunit of the mitochondrial membrane respiratory chain NADH dehydrogenase (Complex I) that is believed to belong to the minimal assembly required for catalysis. Complex I functions in the transfer of electrons from NADH to the respiratory chain. The immediate electron acceptor for the enzyme is believed to be ubiquinone (By similarity).</text>
</comment>
<comment type="catalytic activity">
    <reaction>
        <text>a ubiquinone + NADH + 5 H(+)(in) = a ubiquinol + NAD(+) + 4 H(+)(out)</text>
        <dbReference type="Rhea" id="RHEA:29091"/>
        <dbReference type="Rhea" id="RHEA-COMP:9565"/>
        <dbReference type="Rhea" id="RHEA-COMP:9566"/>
        <dbReference type="ChEBI" id="CHEBI:15378"/>
        <dbReference type="ChEBI" id="CHEBI:16389"/>
        <dbReference type="ChEBI" id="CHEBI:17976"/>
        <dbReference type="ChEBI" id="CHEBI:57540"/>
        <dbReference type="ChEBI" id="CHEBI:57945"/>
        <dbReference type="EC" id="7.1.1.2"/>
    </reaction>
</comment>
<comment type="subcellular location">
    <subcellularLocation>
        <location evidence="1">Mitochondrion membrane</location>
        <topology evidence="1">Multi-pass membrane protein</topology>
    </subcellularLocation>
</comment>
<comment type="similarity">
    <text evidence="3">Belongs to the complex I subunit 4 family.</text>
</comment>
<dbReference type="EC" id="7.1.1.2"/>
<dbReference type="EMBL" id="U41887">
    <property type="protein sequence ID" value="AAB46650.1"/>
    <property type="molecule type" value="Genomic_DNA"/>
</dbReference>
<dbReference type="SMR" id="O03772"/>
<dbReference type="GO" id="GO:0031966">
    <property type="term" value="C:mitochondrial membrane"/>
    <property type="evidence" value="ECO:0007669"/>
    <property type="project" value="UniProtKB-SubCell"/>
</dbReference>
<dbReference type="GO" id="GO:0008137">
    <property type="term" value="F:NADH dehydrogenase (ubiquinone) activity"/>
    <property type="evidence" value="ECO:0007669"/>
    <property type="project" value="UniProtKB-EC"/>
</dbReference>
<dbReference type="GO" id="GO:0048039">
    <property type="term" value="F:ubiquinone binding"/>
    <property type="evidence" value="ECO:0007669"/>
    <property type="project" value="TreeGrafter"/>
</dbReference>
<dbReference type="GO" id="GO:0042773">
    <property type="term" value="P:ATP synthesis coupled electron transport"/>
    <property type="evidence" value="ECO:0007669"/>
    <property type="project" value="InterPro"/>
</dbReference>
<dbReference type="GO" id="GO:0015990">
    <property type="term" value="P:electron transport coupled proton transport"/>
    <property type="evidence" value="ECO:0007669"/>
    <property type="project" value="TreeGrafter"/>
</dbReference>
<dbReference type="InterPro" id="IPR003918">
    <property type="entry name" value="NADH_UbQ_OxRdtase"/>
</dbReference>
<dbReference type="InterPro" id="IPR001750">
    <property type="entry name" value="ND/Mrp_TM"/>
</dbReference>
<dbReference type="PANTHER" id="PTHR43507">
    <property type="entry name" value="NADH-UBIQUINONE OXIDOREDUCTASE CHAIN 4"/>
    <property type="match status" value="1"/>
</dbReference>
<dbReference type="PANTHER" id="PTHR43507:SF20">
    <property type="entry name" value="NADH-UBIQUINONE OXIDOREDUCTASE CHAIN 4"/>
    <property type="match status" value="1"/>
</dbReference>
<dbReference type="Pfam" id="PF00361">
    <property type="entry name" value="Proton_antipo_M"/>
    <property type="match status" value="1"/>
</dbReference>
<sequence>PIAGSMVLAAILLKLGGYGIIRMMQILPMTKTDVFLPFIILALWGAILANLTCLQQTDLKSLIAYSSISHMGLVVAAIMIQTPWGLSGAMALMIAHGFTSSALFCLANTTYERTHTRILILTRGFHNILPMTSTWWLLANLMNMATPPTLNFTSELLIMSTLFNWCPTTIILLGLSMLITASYSLHMFLSTQMGPTLLNNQTEPTHSREHLLMALHLVPLMMISMKPELII</sequence>
<reference key="1">
    <citation type="journal article" date="1996" name="Copeia">
        <title>Crotaline intergeneric relationships based on mitochondrial DNA sequence data.</title>
        <authorList>
            <person name="Kraus F."/>
            <person name="Mink D.G."/>
            <person name="Brown W.M."/>
        </authorList>
    </citation>
    <scope>NUCLEOTIDE SEQUENCE [GENOMIC DNA]</scope>
</reference>
<proteinExistence type="inferred from homology"/>
<accession>O03772</accession>
<name>NU4M_PORNA</name>
<evidence type="ECO:0000250" key="1"/>
<evidence type="ECO:0000255" key="2"/>
<evidence type="ECO:0000305" key="3"/>